<accession>A2ZHL0</accession>
<reference key="1">
    <citation type="journal article" date="2005" name="PLoS Biol.">
        <title>The genomes of Oryza sativa: a history of duplications.</title>
        <authorList>
            <person name="Yu J."/>
            <person name="Wang J."/>
            <person name="Lin W."/>
            <person name="Li S."/>
            <person name="Li H."/>
            <person name="Zhou J."/>
            <person name="Ni P."/>
            <person name="Dong W."/>
            <person name="Hu S."/>
            <person name="Zeng C."/>
            <person name="Zhang J."/>
            <person name="Zhang Y."/>
            <person name="Li R."/>
            <person name="Xu Z."/>
            <person name="Li S."/>
            <person name="Li X."/>
            <person name="Zheng H."/>
            <person name="Cong L."/>
            <person name="Lin L."/>
            <person name="Yin J."/>
            <person name="Geng J."/>
            <person name="Li G."/>
            <person name="Shi J."/>
            <person name="Liu J."/>
            <person name="Lv H."/>
            <person name="Li J."/>
            <person name="Wang J."/>
            <person name="Deng Y."/>
            <person name="Ran L."/>
            <person name="Shi X."/>
            <person name="Wang X."/>
            <person name="Wu Q."/>
            <person name="Li C."/>
            <person name="Ren X."/>
            <person name="Wang J."/>
            <person name="Wang X."/>
            <person name="Li D."/>
            <person name="Liu D."/>
            <person name="Zhang X."/>
            <person name="Ji Z."/>
            <person name="Zhao W."/>
            <person name="Sun Y."/>
            <person name="Zhang Z."/>
            <person name="Bao J."/>
            <person name="Han Y."/>
            <person name="Dong L."/>
            <person name="Ji J."/>
            <person name="Chen P."/>
            <person name="Wu S."/>
            <person name="Liu J."/>
            <person name="Xiao Y."/>
            <person name="Bu D."/>
            <person name="Tan J."/>
            <person name="Yang L."/>
            <person name="Ye C."/>
            <person name="Zhang J."/>
            <person name="Xu J."/>
            <person name="Zhou Y."/>
            <person name="Yu Y."/>
            <person name="Zhang B."/>
            <person name="Zhuang S."/>
            <person name="Wei H."/>
            <person name="Liu B."/>
            <person name="Lei M."/>
            <person name="Yu H."/>
            <person name="Li Y."/>
            <person name="Xu H."/>
            <person name="Wei S."/>
            <person name="He X."/>
            <person name="Fang L."/>
            <person name="Zhang Z."/>
            <person name="Zhang Y."/>
            <person name="Huang X."/>
            <person name="Su Z."/>
            <person name="Tong W."/>
            <person name="Li J."/>
            <person name="Tong Z."/>
            <person name="Li S."/>
            <person name="Ye J."/>
            <person name="Wang L."/>
            <person name="Fang L."/>
            <person name="Lei T."/>
            <person name="Chen C.-S."/>
            <person name="Chen H.-C."/>
            <person name="Xu Z."/>
            <person name="Li H."/>
            <person name="Huang H."/>
            <person name="Zhang F."/>
            <person name="Xu H."/>
            <person name="Li N."/>
            <person name="Zhao C."/>
            <person name="Li S."/>
            <person name="Dong L."/>
            <person name="Huang Y."/>
            <person name="Li L."/>
            <person name="Xi Y."/>
            <person name="Qi Q."/>
            <person name="Li W."/>
            <person name="Zhang B."/>
            <person name="Hu W."/>
            <person name="Zhang Y."/>
            <person name="Tian X."/>
            <person name="Jiao Y."/>
            <person name="Liang X."/>
            <person name="Jin J."/>
            <person name="Gao L."/>
            <person name="Zheng W."/>
            <person name="Hao B."/>
            <person name="Liu S.-M."/>
            <person name="Wang W."/>
            <person name="Yuan L."/>
            <person name="Cao M."/>
            <person name="McDermott J."/>
            <person name="Samudrala R."/>
            <person name="Wang J."/>
            <person name="Wong G.K.-S."/>
            <person name="Yang H."/>
        </authorList>
    </citation>
    <scope>NUCLEOTIDE SEQUENCE [LARGE SCALE GENOMIC DNA]</scope>
    <source>
        <strain>cv. 93-11</strain>
    </source>
</reference>
<protein>
    <recommendedName>
        <fullName>Protein SCARECROW 2</fullName>
    </recommendedName>
    <alternativeName>
        <fullName>OsSCR2</fullName>
    </alternativeName>
</protein>
<name>SCR2_ORYSI</name>
<proteinExistence type="inferred from homology"/>
<sequence length="660" mass="70395">MGSSSLLLFPSSSSSATHSSYSPSSSSHAITSLLPPLPSDHHLLLYLDHQEQHHLAAAMVRKRPASDMDLPPPRRHVTGDLSDVTAAAAGAPTLSASAQLPALPTQLPAFHHTDMDLAAPAPPAPQQVAAGEGGPPSTAWVDGIIRDIIASSGAAVSVAQLIHNVREIIRPCNPDLASILELRLRSLLNSDPAPPPPPPSHPALLPPDATAPPPPPTSVAALPPPPPAQPDKRRREPQCQEQEPNQPQSPKPPTAEETAAAAAAAAAAAAAAAKERKEEQRRKQRDEEGLHLLTLLLQCAESVNADNLDEAHRALLEIAELATPFGTSTQRVAAYFAEAMSARLVSSCLGLYAPLPSPSPAGARVHGRVAAAFQVFNGISPFVKFSHFTANQAIQEAFEREERVHIIDLDIMQGLQWPGLFHILASRPGGPPRVRLTGLGASMEALEATGKRLSDFADTLGLPFEFCPVADKAGNLDPEKLGVTRREAVAVHWLRHSLYDVTGSDSNTLWLIQRLAPKVVTMVEQDLSHSGSFLARFVEAIHYYSALFDSLDASYSEDSPERHVVEQQLLSREIRNVLAVGGPARTGDVKFGSWREKLAQSGFRVSSLAGSAAAQAALLLGMFPSDGYTLIEENGALKLGWKDLCLLTASAWRPIQASGR</sequence>
<evidence type="ECO:0000250" key="1"/>
<evidence type="ECO:0000255" key="2"/>
<evidence type="ECO:0000255" key="3">
    <source>
        <dbReference type="PROSITE-ProRule" id="PRU01191"/>
    </source>
</evidence>
<evidence type="ECO:0000256" key="4">
    <source>
        <dbReference type="SAM" id="MobiDB-lite"/>
    </source>
</evidence>
<evidence type="ECO:0000305" key="5"/>
<dbReference type="EMBL" id="CM000137">
    <property type="protein sequence ID" value="EAY82094.1"/>
    <property type="status" value="ALT_INIT"/>
    <property type="molecule type" value="Genomic_DNA"/>
</dbReference>
<dbReference type="SMR" id="A2ZHL0"/>
<dbReference type="STRING" id="39946.A2ZHL0"/>
<dbReference type="EnsemblPlants" id="OsGoSa_12g0001560.01">
    <property type="protein sequence ID" value="OsGoSa_12g0001560.01"/>
    <property type="gene ID" value="OsGoSa_12g0001560"/>
</dbReference>
<dbReference type="EnsemblPlants" id="OsIR64_12g0001530.01">
    <property type="protein sequence ID" value="OsIR64_12g0001530.01"/>
    <property type="gene ID" value="OsIR64_12g0001530"/>
</dbReference>
<dbReference type="EnsemblPlants" id="OsKYG_12g0001580.01">
    <property type="protein sequence ID" value="OsKYG_12g0001580.01"/>
    <property type="gene ID" value="OsKYG_12g0001580"/>
</dbReference>
<dbReference type="EnsemblPlants" id="OsLima_12g0001430.01">
    <property type="protein sequence ID" value="OsLima_12g0001430.01"/>
    <property type="gene ID" value="OsLima_12g0001430"/>
</dbReference>
<dbReference type="EnsemblPlants" id="OsLiXu_12g0001540.01">
    <property type="protein sequence ID" value="OsLiXu_12g0001540.01"/>
    <property type="gene ID" value="OsLiXu_12g0001540"/>
</dbReference>
<dbReference type="EnsemblPlants" id="OsMH63_12G001560_01">
    <property type="protein sequence ID" value="OsMH63_12G001560_01"/>
    <property type="gene ID" value="OsMH63_12G001560"/>
</dbReference>
<dbReference type="EnsemblPlants" id="OsPr106_12g0001540.01">
    <property type="protein sequence ID" value="OsPr106_12g0001540.01"/>
    <property type="gene ID" value="OsPr106_12g0001540"/>
</dbReference>
<dbReference type="Gramene" id="OsGoSa_12g0001560.01">
    <property type="protein sequence ID" value="OsGoSa_12g0001560.01"/>
    <property type="gene ID" value="OsGoSa_12g0001560"/>
</dbReference>
<dbReference type="Gramene" id="OsIR64_12g0001530.01">
    <property type="protein sequence ID" value="OsIR64_12g0001530.01"/>
    <property type="gene ID" value="OsIR64_12g0001530"/>
</dbReference>
<dbReference type="Gramene" id="OsKYG_12g0001580.01">
    <property type="protein sequence ID" value="OsKYG_12g0001580.01"/>
    <property type="gene ID" value="OsKYG_12g0001580"/>
</dbReference>
<dbReference type="Gramene" id="OsLima_12g0001430.01">
    <property type="protein sequence ID" value="OsLima_12g0001430.01"/>
    <property type="gene ID" value="OsLima_12g0001430"/>
</dbReference>
<dbReference type="Gramene" id="OsLiXu_12g0001540.01">
    <property type="protein sequence ID" value="OsLiXu_12g0001540.01"/>
    <property type="gene ID" value="OsLiXu_12g0001540"/>
</dbReference>
<dbReference type="Gramene" id="OsMH63_12G001560_01">
    <property type="protein sequence ID" value="OsMH63_12G001560_01"/>
    <property type="gene ID" value="OsMH63_12G001560"/>
</dbReference>
<dbReference type="Gramene" id="OsPr106_12g0001540.01">
    <property type="protein sequence ID" value="OsPr106_12g0001540.01"/>
    <property type="gene ID" value="OsPr106_12g0001540"/>
</dbReference>
<dbReference type="HOGENOM" id="CLU_011924_7_2_1"/>
<dbReference type="OrthoDB" id="757063at2759"/>
<dbReference type="Proteomes" id="UP000007015">
    <property type="component" value="Chromosome 12"/>
</dbReference>
<dbReference type="GO" id="GO:0005737">
    <property type="term" value="C:cytoplasm"/>
    <property type="evidence" value="ECO:0007669"/>
    <property type="project" value="UniProtKB-SubCell"/>
</dbReference>
<dbReference type="InterPro" id="IPR005202">
    <property type="entry name" value="TF_GRAS"/>
</dbReference>
<dbReference type="PANTHER" id="PTHR31636">
    <property type="entry name" value="OSJNBA0084A10.13 PROTEIN-RELATED"/>
    <property type="match status" value="1"/>
</dbReference>
<dbReference type="Pfam" id="PF03514">
    <property type="entry name" value="GRAS"/>
    <property type="match status" value="1"/>
</dbReference>
<dbReference type="PROSITE" id="PS50985">
    <property type="entry name" value="GRAS"/>
    <property type="match status" value="1"/>
</dbReference>
<comment type="function">
    <text evidence="1">Probable transcription factor involved in asmmetric cell division in the cortex/endodermis progenitor cell and in the process of stomata and ligule formation in leaves.</text>
</comment>
<comment type="subcellular location">
    <subcellularLocation>
        <location evidence="1">Cytoplasm</location>
    </subcellularLocation>
    <text evidence="1">Localized around the dividing nucleus during asymmetric division.</text>
</comment>
<comment type="similarity">
    <text evidence="5">Belongs to the GRAS family.</text>
</comment>
<comment type="sequence caution" evidence="5">
    <conflict type="erroneous initiation">
        <sequence resource="EMBL-CDS" id="EAY82094"/>
    </conflict>
</comment>
<feature type="chain" id="PRO_0000329420" description="Protein SCARECROW 2">
    <location>
        <begin position="1"/>
        <end position="660"/>
    </location>
</feature>
<feature type="domain" description="GRAS" evidence="3">
    <location>
        <begin position="283"/>
        <end position="653"/>
    </location>
</feature>
<feature type="region of interest" description="Disordered" evidence="4">
    <location>
        <begin position="1"/>
        <end position="33"/>
    </location>
</feature>
<feature type="region of interest" description="Disordered" evidence="4">
    <location>
        <begin position="190"/>
        <end position="286"/>
    </location>
</feature>
<feature type="region of interest" description="Leucine repeat I (LRI)" evidence="3">
    <location>
        <begin position="290"/>
        <end position="354"/>
    </location>
</feature>
<feature type="region of interest" description="VHIID" evidence="3">
    <location>
        <begin position="373"/>
        <end position="438"/>
    </location>
</feature>
<feature type="region of interest" description="Leucine repeat II (LRII)" evidence="3">
    <location>
        <begin position="448"/>
        <end position="480"/>
    </location>
</feature>
<feature type="region of interest" description="PFYRE" evidence="3">
    <location>
        <begin position="489"/>
        <end position="576"/>
    </location>
</feature>
<feature type="region of interest" description="SAW" evidence="3">
    <location>
        <begin position="579"/>
        <end position="653"/>
    </location>
</feature>
<feature type="coiled-coil region" evidence="2">
    <location>
        <begin position="262"/>
        <end position="289"/>
    </location>
</feature>
<feature type="short sequence motif" description="LxCxE motif" evidence="3">
    <location>
        <begin position="297"/>
        <end position="301"/>
    </location>
</feature>
<feature type="short sequence motif" description="VHIID" evidence="3">
    <location>
        <begin position="404"/>
        <end position="408"/>
    </location>
</feature>
<feature type="compositionally biased region" description="Pro residues" evidence="4">
    <location>
        <begin position="192"/>
        <end position="229"/>
    </location>
</feature>
<feature type="compositionally biased region" description="Low complexity" evidence="4">
    <location>
        <begin position="259"/>
        <end position="272"/>
    </location>
</feature>
<feature type="compositionally biased region" description="Basic and acidic residues" evidence="4">
    <location>
        <begin position="273"/>
        <end position="286"/>
    </location>
</feature>
<organism>
    <name type="scientific">Oryza sativa subsp. indica</name>
    <name type="common">Rice</name>
    <dbReference type="NCBI Taxonomy" id="39946"/>
    <lineage>
        <taxon>Eukaryota</taxon>
        <taxon>Viridiplantae</taxon>
        <taxon>Streptophyta</taxon>
        <taxon>Embryophyta</taxon>
        <taxon>Tracheophyta</taxon>
        <taxon>Spermatophyta</taxon>
        <taxon>Magnoliopsida</taxon>
        <taxon>Liliopsida</taxon>
        <taxon>Poales</taxon>
        <taxon>Poaceae</taxon>
        <taxon>BOP clade</taxon>
        <taxon>Oryzoideae</taxon>
        <taxon>Oryzeae</taxon>
        <taxon>Oryzinae</taxon>
        <taxon>Oryza</taxon>
        <taxon>Oryza sativa</taxon>
    </lineage>
</organism>
<keyword id="KW-0175">Coiled coil</keyword>
<keyword id="KW-0963">Cytoplasm</keyword>
<keyword id="KW-0217">Developmental protein</keyword>
<keyword id="KW-1185">Reference proteome</keyword>
<keyword id="KW-0804">Transcription</keyword>
<keyword id="KW-0805">Transcription regulation</keyword>
<gene>
    <name type="primary">SCR2</name>
    <name type="ORF">OsI_036053</name>
</gene>